<dbReference type="EC" id="2.4.1.-"/>
<dbReference type="EMBL" id="Z97338">
    <property type="protein sequence ID" value="CAB10307.1"/>
    <property type="molecule type" value="Genomic_DNA"/>
</dbReference>
<dbReference type="EMBL" id="AL161541">
    <property type="protein sequence ID" value="CAB78570.1"/>
    <property type="molecule type" value="Genomic_DNA"/>
</dbReference>
<dbReference type="EMBL" id="CP002687">
    <property type="protein sequence ID" value="AEE83580.1"/>
    <property type="molecule type" value="Genomic_DNA"/>
</dbReference>
<dbReference type="PIR" id="A71417">
    <property type="entry name" value="A71417"/>
</dbReference>
<dbReference type="RefSeq" id="NP_193263.1">
    <property type="nucleotide sequence ID" value="NM_117616.2"/>
</dbReference>
<dbReference type="SMR" id="O23382"/>
<dbReference type="FunCoup" id="O23382">
    <property type="interactions" value="232"/>
</dbReference>
<dbReference type="STRING" id="3702.O23382"/>
<dbReference type="CAZy" id="GT1">
    <property type="family name" value="Glycosyltransferase Family 1"/>
</dbReference>
<dbReference type="MetOSite" id="O23382"/>
<dbReference type="PaxDb" id="3702-AT4G15280.1"/>
<dbReference type="ProteomicsDB" id="228614"/>
<dbReference type="EnsemblPlants" id="AT4G15280.1">
    <property type="protein sequence ID" value="AT4G15280.1"/>
    <property type="gene ID" value="AT4G15280"/>
</dbReference>
<dbReference type="GeneID" id="827194"/>
<dbReference type="Gramene" id="AT4G15280.1">
    <property type="protein sequence ID" value="AT4G15280.1"/>
    <property type="gene ID" value="AT4G15280"/>
</dbReference>
<dbReference type="KEGG" id="ath:AT4G15280"/>
<dbReference type="Araport" id="AT4G15280"/>
<dbReference type="TAIR" id="AT4G15280">
    <property type="gene designation" value="UGT71B5"/>
</dbReference>
<dbReference type="eggNOG" id="KOG1192">
    <property type="taxonomic scope" value="Eukaryota"/>
</dbReference>
<dbReference type="HOGENOM" id="CLU_001724_3_2_1"/>
<dbReference type="InParanoid" id="O23382"/>
<dbReference type="OMA" id="ECLPYIF"/>
<dbReference type="PhylomeDB" id="O23382"/>
<dbReference type="PRO" id="PR:O23382"/>
<dbReference type="Proteomes" id="UP000006548">
    <property type="component" value="Chromosome 4"/>
</dbReference>
<dbReference type="ExpressionAtlas" id="O23382">
    <property type="expression patterns" value="baseline and differential"/>
</dbReference>
<dbReference type="GO" id="GO:0080043">
    <property type="term" value="F:quercetin 3-O-glucosyltransferase activity"/>
    <property type="evidence" value="ECO:0000314"/>
    <property type="project" value="TAIR"/>
</dbReference>
<dbReference type="CDD" id="cd03784">
    <property type="entry name" value="GT1_Gtf-like"/>
    <property type="match status" value="1"/>
</dbReference>
<dbReference type="FunFam" id="3.40.50.2000:FF:000056">
    <property type="entry name" value="Glycosyltransferase"/>
    <property type="match status" value="1"/>
</dbReference>
<dbReference type="FunFam" id="3.40.50.2000:FF:000080">
    <property type="entry name" value="Glycosyltransferase"/>
    <property type="match status" value="1"/>
</dbReference>
<dbReference type="Gene3D" id="3.40.50.2000">
    <property type="entry name" value="Glycogen Phosphorylase B"/>
    <property type="match status" value="2"/>
</dbReference>
<dbReference type="InterPro" id="IPR050481">
    <property type="entry name" value="UDP-glycosyltransf_plant"/>
</dbReference>
<dbReference type="InterPro" id="IPR002213">
    <property type="entry name" value="UDP_glucos_trans"/>
</dbReference>
<dbReference type="InterPro" id="IPR035595">
    <property type="entry name" value="UDP_glycos_trans_CS"/>
</dbReference>
<dbReference type="PANTHER" id="PTHR48048">
    <property type="entry name" value="GLYCOSYLTRANSFERASE"/>
    <property type="match status" value="1"/>
</dbReference>
<dbReference type="PANTHER" id="PTHR48048:SF45">
    <property type="entry name" value="GLYCOSYLTRANSFERASE"/>
    <property type="match status" value="1"/>
</dbReference>
<dbReference type="Pfam" id="PF00201">
    <property type="entry name" value="UDPGT"/>
    <property type="match status" value="1"/>
</dbReference>
<dbReference type="SUPFAM" id="SSF53756">
    <property type="entry name" value="UDP-Glycosyltransferase/glycogen phosphorylase"/>
    <property type="match status" value="1"/>
</dbReference>
<dbReference type="PROSITE" id="PS00375">
    <property type="entry name" value="UDPGT"/>
    <property type="match status" value="1"/>
</dbReference>
<comment type="function">
    <text evidence="2">Possesses low quercetin 3-O-glucosyltransferase activity in vitro.</text>
</comment>
<comment type="similarity">
    <text evidence="3">Belongs to the UDP-glycosyltransferase family.</text>
</comment>
<evidence type="ECO:0000250" key="1"/>
<evidence type="ECO:0000269" key="2">
    <source>
    </source>
</evidence>
<evidence type="ECO:0000305" key="3"/>
<keyword id="KW-0328">Glycosyltransferase</keyword>
<keyword id="KW-1185">Reference proteome</keyword>
<keyword id="KW-0808">Transferase</keyword>
<proteinExistence type="inferred from homology"/>
<sequence length="478" mass="53714">MKIELVFIPLPGIGHLRPTVKLAKQLIGSENRLSITIIIIPSRFDAGDASACIASLTTLSQDDRLHYESISVAKQPPTSDPDPVPAQVYIEKQKTKVRDAVAARIVDPTRKLAGFVVDMFCSSMIDVANEFGVPCYMVYTSNATFLGTMLHVQQMYDQKKYDVSELENSVTELEFPSLTRPYPVKCLPHILTSKEWLPLSLAQARCFRKMKGILVNTVAELEPHALKMFNINGDDLPQVYPVGPVLHLENGNDDDEKQSEILRWLDEQPSKSVVFLCFGSLGGFTEEQTRETAVALDRSGQRFLWCLRHASPNIKTDRPRDYTNLEEVLPEGFLERTLDRGKVIGWAPQVAVLEKPAIGGFVTHCGWNSILESLWFGVPMVTWPLYAEQKVNAFEMVEELGLAVEIRKYLKGDLFAGEMETVTAEDIERAIRRVMEQDSDVRNNVKEMAEKCHFALMDGGSSKAALEKFIQDVIENMD</sequence>
<feature type="chain" id="PRO_0000409049" description="UDP-glycosyltransferase 71B5">
    <location>
        <begin position="1"/>
        <end position="478"/>
    </location>
</feature>
<feature type="binding site" evidence="1">
    <location>
        <position position="280"/>
    </location>
    <ligand>
        <name>UDP-alpha-D-glucose</name>
        <dbReference type="ChEBI" id="CHEBI:58885"/>
    </ligand>
</feature>
<feature type="binding site" evidence="1">
    <location>
        <begin position="347"/>
        <end position="349"/>
    </location>
    <ligand>
        <name>UDP-alpha-D-glucose</name>
        <dbReference type="ChEBI" id="CHEBI:58885"/>
    </ligand>
</feature>
<feature type="binding site" evidence="1">
    <location>
        <begin position="364"/>
        <end position="372"/>
    </location>
    <ligand>
        <name>UDP-alpha-D-glucose</name>
        <dbReference type="ChEBI" id="CHEBI:58885"/>
    </ligand>
</feature>
<feature type="binding site" evidence="1">
    <location>
        <begin position="386"/>
        <end position="389"/>
    </location>
    <ligand>
        <name>UDP-alpha-D-glucose</name>
        <dbReference type="ChEBI" id="CHEBI:58885"/>
    </ligand>
</feature>
<protein>
    <recommendedName>
        <fullName>UDP-glycosyltransferase 71B5</fullName>
        <ecNumber>2.4.1.-</ecNumber>
    </recommendedName>
</protein>
<gene>
    <name type="primary">UGT71B5</name>
    <name type="ordered locus">At4g15280</name>
    <name type="ORF">dl3685w</name>
    <name type="ORF">FCAALL.255</name>
</gene>
<accession>O23382</accession>
<organism>
    <name type="scientific">Arabidopsis thaliana</name>
    <name type="common">Mouse-ear cress</name>
    <dbReference type="NCBI Taxonomy" id="3702"/>
    <lineage>
        <taxon>Eukaryota</taxon>
        <taxon>Viridiplantae</taxon>
        <taxon>Streptophyta</taxon>
        <taxon>Embryophyta</taxon>
        <taxon>Tracheophyta</taxon>
        <taxon>Spermatophyta</taxon>
        <taxon>Magnoliopsida</taxon>
        <taxon>eudicotyledons</taxon>
        <taxon>Gunneridae</taxon>
        <taxon>Pentapetalae</taxon>
        <taxon>rosids</taxon>
        <taxon>malvids</taxon>
        <taxon>Brassicales</taxon>
        <taxon>Brassicaceae</taxon>
        <taxon>Camelineae</taxon>
        <taxon>Arabidopsis</taxon>
    </lineage>
</organism>
<name>U71B5_ARATH</name>
<reference key="1">
    <citation type="journal article" date="1998" name="Nature">
        <title>Analysis of 1.9 Mb of contiguous sequence from chromosome 4 of Arabidopsis thaliana.</title>
        <authorList>
            <person name="Bevan M."/>
            <person name="Bancroft I."/>
            <person name="Bent E."/>
            <person name="Love K."/>
            <person name="Goodman H.M."/>
            <person name="Dean C."/>
            <person name="Bergkamp R."/>
            <person name="Dirkse W."/>
            <person name="van Staveren M."/>
            <person name="Stiekema W."/>
            <person name="Drost L."/>
            <person name="Ridley P."/>
            <person name="Hudson S.-A."/>
            <person name="Patel K."/>
            <person name="Murphy G."/>
            <person name="Piffanelli P."/>
            <person name="Wedler H."/>
            <person name="Wedler E."/>
            <person name="Wambutt R."/>
            <person name="Weitzenegger T."/>
            <person name="Pohl T."/>
            <person name="Terryn N."/>
            <person name="Gielen J."/>
            <person name="Villarroel R."/>
            <person name="De Clercq R."/>
            <person name="van Montagu M."/>
            <person name="Lecharny A."/>
            <person name="Aubourg S."/>
            <person name="Gy I."/>
            <person name="Kreis M."/>
            <person name="Lao N."/>
            <person name="Kavanagh T."/>
            <person name="Hempel S."/>
            <person name="Kotter P."/>
            <person name="Entian K.-D."/>
            <person name="Rieger M."/>
            <person name="Schaefer M."/>
            <person name="Funk B."/>
            <person name="Mueller-Auer S."/>
            <person name="Silvey M."/>
            <person name="James R."/>
            <person name="Monfort A."/>
            <person name="Pons A."/>
            <person name="Puigdomenech P."/>
            <person name="Douka A."/>
            <person name="Voukelatou E."/>
            <person name="Milioni D."/>
            <person name="Hatzopoulos P."/>
            <person name="Piravandi E."/>
            <person name="Obermaier B."/>
            <person name="Hilbert H."/>
            <person name="Duesterhoeft A."/>
            <person name="Moores T."/>
            <person name="Jones J.D.G."/>
            <person name="Eneva T."/>
            <person name="Palme K."/>
            <person name="Benes V."/>
            <person name="Rechmann S."/>
            <person name="Ansorge W."/>
            <person name="Cooke R."/>
            <person name="Berger C."/>
            <person name="Delseny M."/>
            <person name="Voet M."/>
            <person name="Volckaert G."/>
            <person name="Mewes H.-W."/>
            <person name="Klosterman S."/>
            <person name="Schueller C."/>
            <person name="Chalwatzis N."/>
        </authorList>
    </citation>
    <scope>NUCLEOTIDE SEQUENCE [LARGE SCALE GENOMIC DNA]</scope>
    <source>
        <strain>cv. Columbia</strain>
    </source>
</reference>
<reference key="2">
    <citation type="journal article" date="1999" name="Nature">
        <title>Sequence and analysis of chromosome 4 of the plant Arabidopsis thaliana.</title>
        <authorList>
            <person name="Mayer K.F.X."/>
            <person name="Schueller C."/>
            <person name="Wambutt R."/>
            <person name="Murphy G."/>
            <person name="Volckaert G."/>
            <person name="Pohl T."/>
            <person name="Duesterhoeft A."/>
            <person name="Stiekema W."/>
            <person name="Entian K.-D."/>
            <person name="Terryn N."/>
            <person name="Harris B."/>
            <person name="Ansorge W."/>
            <person name="Brandt P."/>
            <person name="Grivell L.A."/>
            <person name="Rieger M."/>
            <person name="Weichselgartner M."/>
            <person name="de Simone V."/>
            <person name="Obermaier B."/>
            <person name="Mache R."/>
            <person name="Mueller M."/>
            <person name="Kreis M."/>
            <person name="Delseny M."/>
            <person name="Puigdomenech P."/>
            <person name="Watson M."/>
            <person name="Schmidtheini T."/>
            <person name="Reichert B."/>
            <person name="Portetelle D."/>
            <person name="Perez-Alonso M."/>
            <person name="Boutry M."/>
            <person name="Bancroft I."/>
            <person name="Vos P."/>
            <person name="Hoheisel J."/>
            <person name="Zimmermann W."/>
            <person name="Wedler H."/>
            <person name="Ridley P."/>
            <person name="Langham S.-A."/>
            <person name="McCullagh B."/>
            <person name="Bilham L."/>
            <person name="Robben J."/>
            <person name="van der Schueren J."/>
            <person name="Grymonprez B."/>
            <person name="Chuang Y.-J."/>
            <person name="Vandenbussche F."/>
            <person name="Braeken M."/>
            <person name="Weltjens I."/>
            <person name="Voet M."/>
            <person name="Bastiaens I."/>
            <person name="Aert R."/>
            <person name="Defoor E."/>
            <person name="Weitzenegger T."/>
            <person name="Bothe G."/>
            <person name="Ramsperger U."/>
            <person name="Hilbert H."/>
            <person name="Braun M."/>
            <person name="Holzer E."/>
            <person name="Brandt A."/>
            <person name="Peters S."/>
            <person name="van Staveren M."/>
            <person name="Dirkse W."/>
            <person name="Mooijman P."/>
            <person name="Klein Lankhorst R."/>
            <person name="Rose M."/>
            <person name="Hauf J."/>
            <person name="Koetter P."/>
            <person name="Berneiser S."/>
            <person name="Hempel S."/>
            <person name="Feldpausch M."/>
            <person name="Lamberth S."/>
            <person name="Van den Daele H."/>
            <person name="De Keyser A."/>
            <person name="Buysshaert C."/>
            <person name="Gielen J."/>
            <person name="Villarroel R."/>
            <person name="De Clercq R."/>
            <person name="van Montagu M."/>
            <person name="Rogers J."/>
            <person name="Cronin A."/>
            <person name="Quail M.A."/>
            <person name="Bray-Allen S."/>
            <person name="Clark L."/>
            <person name="Doggett J."/>
            <person name="Hall S."/>
            <person name="Kay M."/>
            <person name="Lennard N."/>
            <person name="McLay K."/>
            <person name="Mayes R."/>
            <person name="Pettett A."/>
            <person name="Rajandream M.A."/>
            <person name="Lyne M."/>
            <person name="Benes V."/>
            <person name="Rechmann S."/>
            <person name="Borkova D."/>
            <person name="Bloecker H."/>
            <person name="Scharfe M."/>
            <person name="Grimm M."/>
            <person name="Loehnert T.-H."/>
            <person name="Dose S."/>
            <person name="de Haan M."/>
            <person name="Maarse A.C."/>
            <person name="Schaefer M."/>
            <person name="Mueller-Auer S."/>
            <person name="Gabel C."/>
            <person name="Fuchs M."/>
            <person name="Fartmann B."/>
            <person name="Granderath K."/>
            <person name="Dauner D."/>
            <person name="Herzl A."/>
            <person name="Neumann S."/>
            <person name="Argiriou A."/>
            <person name="Vitale D."/>
            <person name="Liguori R."/>
            <person name="Piravandi E."/>
            <person name="Massenet O."/>
            <person name="Quigley F."/>
            <person name="Clabauld G."/>
            <person name="Muendlein A."/>
            <person name="Felber R."/>
            <person name="Schnabl S."/>
            <person name="Hiller R."/>
            <person name="Schmidt W."/>
            <person name="Lecharny A."/>
            <person name="Aubourg S."/>
            <person name="Chefdor F."/>
            <person name="Cooke R."/>
            <person name="Berger C."/>
            <person name="Monfort A."/>
            <person name="Casacuberta E."/>
            <person name="Gibbons T."/>
            <person name="Weber N."/>
            <person name="Vandenbol M."/>
            <person name="Bargues M."/>
            <person name="Terol J."/>
            <person name="Torres A."/>
            <person name="Perez-Perez A."/>
            <person name="Purnelle B."/>
            <person name="Bent E."/>
            <person name="Johnson S."/>
            <person name="Tacon D."/>
            <person name="Jesse T."/>
            <person name="Heijnen L."/>
            <person name="Schwarz S."/>
            <person name="Scholler P."/>
            <person name="Heber S."/>
            <person name="Francs P."/>
            <person name="Bielke C."/>
            <person name="Frishman D."/>
            <person name="Haase D."/>
            <person name="Lemcke K."/>
            <person name="Mewes H.-W."/>
            <person name="Stocker S."/>
            <person name="Zaccaria P."/>
            <person name="Bevan M."/>
            <person name="Wilson R.K."/>
            <person name="de la Bastide M."/>
            <person name="Habermann K."/>
            <person name="Parnell L."/>
            <person name="Dedhia N."/>
            <person name="Gnoj L."/>
            <person name="Schutz K."/>
            <person name="Huang E."/>
            <person name="Spiegel L."/>
            <person name="Sekhon M."/>
            <person name="Murray J."/>
            <person name="Sheet P."/>
            <person name="Cordes M."/>
            <person name="Abu-Threideh J."/>
            <person name="Stoneking T."/>
            <person name="Kalicki J."/>
            <person name="Graves T."/>
            <person name="Harmon G."/>
            <person name="Edwards J."/>
            <person name="Latreille P."/>
            <person name="Courtney L."/>
            <person name="Cloud J."/>
            <person name="Abbott A."/>
            <person name="Scott K."/>
            <person name="Johnson D."/>
            <person name="Minx P."/>
            <person name="Bentley D."/>
            <person name="Fulton B."/>
            <person name="Miller N."/>
            <person name="Greco T."/>
            <person name="Kemp K."/>
            <person name="Kramer J."/>
            <person name="Fulton L."/>
            <person name="Mardis E."/>
            <person name="Dante M."/>
            <person name="Pepin K."/>
            <person name="Hillier L.W."/>
            <person name="Nelson J."/>
            <person name="Spieth J."/>
            <person name="Ryan E."/>
            <person name="Andrews S."/>
            <person name="Geisel C."/>
            <person name="Layman D."/>
            <person name="Du H."/>
            <person name="Ali J."/>
            <person name="Berghoff A."/>
            <person name="Jones K."/>
            <person name="Drone K."/>
            <person name="Cotton M."/>
            <person name="Joshu C."/>
            <person name="Antonoiu B."/>
            <person name="Zidanic M."/>
            <person name="Strong C."/>
            <person name="Sun H."/>
            <person name="Lamar B."/>
            <person name="Yordan C."/>
            <person name="Ma P."/>
            <person name="Zhong J."/>
            <person name="Preston R."/>
            <person name="Vil D."/>
            <person name="Shekher M."/>
            <person name="Matero A."/>
            <person name="Shah R."/>
            <person name="Swaby I.K."/>
            <person name="O'Shaughnessy A."/>
            <person name="Rodriguez M."/>
            <person name="Hoffman J."/>
            <person name="Till S."/>
            <person name="Granat S."/>
            <person name="Shohdy N."/>
            <person name="Hasegawa A."/>
            <person name="Hameed A."/>
            <person name="Lodhi M."/>
            <person name="Johnson A."/>
            <person name="Chen E."/>
            <person name="Marra M.A."/>
            <person name="Martienssen R."/>
            <person name="McCombie W.R."/>
        </authorList>
    </citation>
    <scope>NUCLEOTIDE SEQUENCE [LARGE SCALE GENOMIC DNA]</scope>
    <source>
        <strain>cv. Columbia</strain>
    </source>
</reference>
<reference key="3">
    <citation type="journal article" date="2017" name="Plant J.">
        <title>Araport11: a complete reannotation of the Arabidopsis thaliana reference genome.</title>
        <authorList>
            <person name="Cheng C.Y."/>
            <person name="Krishnakumar V."/>
            <person name="Chan A.P."/>
            <person name="Thibaud-Nissen F."/>
            <person name="Schobel S."/>
            <person name="Town C.D."/>
        </authorList>
    </citation>
    <scope>GENOME REANNOTATION</scope>
    <source>
        <strain>cv. Columbia</strain>
    </source>
</reference>
<reference key="4">
    <citation type="journal article" date="2001" name="J. Biol. Chem.">
        <title>Phylogenetic analysis of the UDP-glycosyltransferase multigene family of Arabidopsis thaliana.</title>
        <authorList>
            <person name="Li Y."/>
            <person name="Baldauf S."/>
            <person name="Lim E.K."/>
            <person name="Bowles D.J."/>
        </authorList>
    </citation>
    <scope>GENE FAMILY</scope>
</reference>
<reference key="5">
    <citation type="journal article" date="2004" name="Biotechnol. Bioeng.">
        <title>Arabidopsis glycosyltransferases as biocatalysts in fermentation for regioselective synthesis of diverse quercetin glucosides.</title>
        <authorList>
            <person name="Lim E.K."/>
            <person name="Ashford D.A."/>
            <person name="Hou B."/>
            <person name="Jackson R.G."/>
            <person name="Bowles D.J."/>
        </authorList>
    </citation>
    <scope>FUNCTION</scope>
</reference>